<comment type="function">
    <text evidence="1">Transfers and isomerizes the ribose moiety from AdoMet to the 7-aminomethyl group of 7-deazaguanine (preQ1-tRNA) to give epoxyqueuosine (oQ-tRNA).</text>
</comment>
<comment type="catalytic activity">
    <reaction evidence="1">
        <text>7-aminomethyl-7-carbaguanosine(34) in tRNA + S-adenosyl-L-methionine = epoxyqueuosine(34) in tRNA + adenine + L-methionine + 2 H(+)</text>
        <dbReference type="Rhea" id="RHEA:32155"/>
        <dbReference type="Rhea" id="RHEA-COMP:10342"/>
        <dbReference type="Rhea" id="RHEA-COMP:18582"/>
        <dbReference type="ChEBI" id="CHEBI:15378"/>
        <dbReference type="ChEBI" id="CHEBI:16708"/>
        <dbReference type="ChEBI" id="CHEBI:57844"/>
        <dbReference type="ChEBI" id="CHEBI:59789"/>
        <dbReference type="ChEBI" id="CHEBI:82833"/>
        <dbReference type="ChEBI" id="CHEBI:194443"/>
        <dbReference type="EC" id="2.4.99.17"/>
    </reaction>
</comment>
<comment type="pathway">
    <text evidence="1">tRNA modification; tRNA-queuosine biosynthesis.</text>
</comment>
<comment type="subunit">
    <text evidence="1">Monomer.</text>
</comment>
<comment type="subcellular location">
    <subcellularLocation>
        <location evidence="1">Cytoplasm</location>
    </subcellularLocation>
</comment>
<comment type="similarity">
    <text evidence="1">Belongs to the QueA family.</text>
</comment>
<feature type="chain" id="PRO_0000231321" description="S-adenosylmethionine:tRNA ribosyltransferase-isomerase">
    <location>
        <begin position="1"/>
        <end position="363"/>
    </location>
</feature>
<dbReference type="EC" id="2.4.99.17" evidence="1"/>
<dbReference type="EMBL" id="AE017223">
    <property type="protein sequence ID" value="AAX74439.1"/>
    <property type="molecule type" value="Genomic_DNA"/>
</dbReference>
<dbReference type="RefSeq" id="WP_002964220.1">
    <property type="nucleotide sequence ID" value="NC_006932.1"/>
</dbReference>
<dbReference type="SMR" id="Q57D45"/>
<dbReference type="EnsemblBacteria" id="AAX74439">
    <property type="protein sequence ID" value="AAX74439"/>
    <property type="gene ID" value="BruAb1_1098"/>
</dbReference>
<dbReference type="GeneID" id="97533650"/>
<dbReference type="KEGG" id="bmb:BruAb1_1098"/>
<dbReference type="HOGENOM" id="CLU_039110_1_1_5"/>
<dbReference type="UniPathway" id="UPA00392"/>
<dbReference type="Proteomes" id="UP000000540">
    <property type="component" value="Chromosome I"/>
</dbReference>
<dbReference type="GO" id="GO:0005737">
    <property type="term" value="C:cytoplasm"/>
    <property type="evidence" value="ECO:0007669"/>
    <property type="project" value="UniProtKB-SubCell"/>
</dbReference>
<dbReference type="GO" id="GO:0051075">
    <property type="term" value="F:S-adenosylmethionine:tRNA ribosyltransferase-isomerase activity"/>
    <property type="evidence" value="ECO:0007669"/>
    <property type="project" value="UniProtKB-EC"/>
</dbReference>
<dbReference type="GO" id="GO:0008616">
    <property type="term" value="P:queuosine biosynthetic process"/>
    <property type="evidence" value="ECO:0007669"/>
    <property type="project" value="UniProtKB-UniRule"/>
</dbReference>
<dbReference type="GO" id="GO:0002099">
    <property type="term" value="P:tRNA wobble guanine modification"/>
    <property type="evidence" value="ECO:0007669"/>
    <property type="project" value="TreeGrafter"/>
</dbReference>
<dbReference type="FunFam" id="3.40.1780.10:FF:000001">
    <property type="entry name" value="S-adenosylmethionine:tRNA ribosyltransferase-isomerase"/>
    <property type="match status" value="1"/>
</dbReference>
<dbReference type="Gene3D" id="2.40.10.240">
    <property type="entry name" value="QueA-like"/>
    <property type="match status" value="1"/>
</dbReference>
<dbReference type="Gene3D" id="3.40.1780.10">
    <property type="entry name" value="QueA-like"/>
    <property type="match status" value="1"/>
</dbReference>
<dbReference type="HAMAP" id="MF_00113">
    <property type="entry name" value="QueA"/>
    <property type="match status" value="1"/>
</dbReference>
<dbReference type="InterPro" id="IPR003699">
    <property type="entry name" value="QueA"/>
</dbReference>
<dbReference type="InterPro" id="IPR042118">
    <property type="entry name" value="QueA_dom1"/>
</dbReference>
<dbReference type="InterPro" id="IPR042119">
    <property type="entry name" value="QueA_dom2"/>
</dbReference>
<dbReference type="InterPro" id="IPR036100">
    <property type="entry name" value="QueA_sf"/>
</dbReference>
<dbReference type="NCBIfam" id="NF001140">
    <property type="entry name" value="PRK00147.1"/>
    <property type="match status" value="1"/>
</dbReference>
<dbReference type="NCBIfam" id="TIGR00113">
    <property type="entry name" value="queA"/>
    <property type="match status" value="1"/>
</dbReference>
<dbReference type="PANTHER" id="PTHR30307">
    <property type="entry name" value="S-ADENOSYLMETHIONINE:TRNA RIBOSYLTRANSFERASE-ISOMERASE"/>
    <property type="match status" value="1"/>
</dbReference>
<dbReference type="PANTHER" id="PTHR30307:SF0">
    <property type="entry name" value="S-ADENOSYLMETHIONINE:TRNA RIBOSYLTRANSFERASE-ISOMERASE"/>
    <property type="match status" value="1"/>
</dbReference>
<dbReference type="Pfam" id="PF02547">
    <property type="entry name" value="Queuosine_synth"/>
    <property type="match status" value="1"/>
</dbReference>
<dbReference type="SUPFAM" id="SSF111337">
    <property type="entry name" value="QueA-like"/>
    <property type="match status" value="1"/>
</dbReference>
<reference key="1">
    <citation type="journal article" date="2005" name="J. Bacteriol.">
        <title>Completion of the genome sequence of Brucella abortus and comparison to the highly similar genomes of Brucella melitensis and Brucella suis.</title>
        <authorList>
            <person name="Halling S.M."/>
            <person name="Peterson-Burch B.D."/>
            <person name="Bricker B.J."/>
            <person name="Zuerner R.L."/>
            <person name="Qing Z."/>
            <person name="Li L.-L."/>
            <person name="Kapur V."/>
            <person name="Alt D.P."/>
            <person name="Olsen S.C."/>
        </authorList>
    </citation>
    <scope>NUCLEOTIDE SEQUENCE [LARGE SCALE GENOMIC DNA]</scope>
    <source>
        <strain>9-941</strain>
    </source>
</reference>
<accession>Q57D45</accession>
<keyword id="KW-0963">Cytoplasm</keyword>
<keyword id="KW-0671">Queuosine biosynthesis</keyword>
<keyword id="KW-0949">S-adenosyl-L-methionine</keyword>
<keyword id="KW-0808">Transferase</keyword>
<sequence length="363" mass="40174">MRVDLFDFDLPEERIALRPVEPRDHAKLLHVRPGEPFEDRHVYDLPDLLQPGDALVFNDTKVIPAQLEGMRERTGNISQVSATLHMRVGPDRWKAFLRPAKRVKEGDRIRFGHSGTSCFLGTLDATVAEKGDSGEALLVFDLSGAVLDEAIAAVGHIPLPPYIASKRPEDERDRKDYQTVYAREEGAVAAPTAGLHFTPDLLEKIKARGIEEHFVTLHVGAGTFLPVKADDTGDHKMHAEIGHVSQRTASALNAVHERGGRIICVGTTSLRLIESATGEDGVVRPWSGATDIFITPGYRFRAVDLLMTNFHLPRSTLFMLVSAFSGLDTMHAAYNYAIADGYRFYSYGDASLLERIDHDRHSA</sequence>
<protein>
    <recommendedName>
        <fullName evidence="1">S-adenosylmethionine:tRNA ribosyltransferase-isomerase</fullName>
        <ecNumber evidence="1">2.4.99.17</ecNumber>
    </recommendedName>
    <alternativeName>
        <fullName evidence="1">Queuosine biosynthesis protein QueA</fullName>
    </alternativeName>
</protein>
<gene>
    <name evidence="1" type="primary">queA</name>
    <name type="ordered locus">BruAb1_1098</name>
</gene>
<organism>
    <name type="scientific">Brucella abortus biovar 1 (strain 9-941)</name>
    <dbReference type="NCBI Taxonomy" id="262698"/>
    <lineage>
        <taxon>Bacteria</taxon>
        <taxon>Pseudomonadati</taxon>
        <taxon>Pseudomonadota</taxon>
        <taxon>Alphaproteobacteria</taxon>
        <taxon>Hyphomicrobiales</taxon>
        <taxon>Brucellaceae</taxon>
        <taxon>Brucella/Ochrobactrum group</taxon>
        <taxon>Brucella</taxon>
    </lineage>
</organism>
<name>QUEA_BRUAB</name>
<evidence type="ECO:0000255" key="1">
    <source>
        <dbReference type="HAMAP-Rule" id="MF_00113"/>
    </source>
</evidence>
<proteinExistence type="inferred from homology"/>